<evidence type="ECO:0000250" key="1">
    <source>
        <dbReference type="UniProtKB" id="P11344"/>
    </source>
</evidence>
<evidence type="ECO:0000250" key="2">
    <source>
        <dbReference type="UniProtKB" id="P14679"/>
    </source>
</evidence>
<evidence type="ECO:0000250" key="3">
    <source>
        <dbReference type="UniProtKB" id="Q9ZP19"/>
    </source>
</evidence>
<evidence type="ECO:0000255" key="4"/>
<evidence type="ECO:0000256" key="5">
    <source>
        <dbReference type="SAM" id="MobiDB-lite"/>
    </source>
</evidence>
<evidence type="ECO:0000305" key="6"/>
<proteinExistence type="evidence at transcript level"/>
<name>TYRO_CHICK</name>
<dbReference type="EC" id="1.14.18.1"/>
<dbReference type="EMBL" id="D88349">
    <property type="protein sequence ID" value="BAA13590.1"/>
    <property type="molecule type" value="mRNA"/>
</dbReference>
<dbReference type="EMBL" id="L46805">
    <property type="protein sequence ID" value="AAB08441.1"/>
    <property type="molecule type" value="Genomic_DNA"/>
</dbReference>
<dbReference type="PIR" id="PC4153">
    <property type="entry name" value="PC4153"/>
</dbReference>
<dbReference type="RefSeq" id="NP_989491.1">
    <property type="nucleotide sequence ID" value="NM_204160.2"/>
</dbReference>
<dbReference type="SMR" id="P55024"/>
<dbReference type="FunCoup" id="P55024">
    <property type="interactions" value="17"/>
</dbReference>
<dbReference type="STRING" id="9031.ENSGALP00000027812"/>
<dbReference type="GlyCosmos" id="P55024">
    <property type="glycosylation" value="8 sites, No reported glycans"/>
</dbReference>
<dbReference type="GlyGen" id="P55024">
    <property type="glycosylation" value="8 sites"/>
</dbReference>
<dbReference type="PaxDb" id="9031-ENSGALP00000027812"/>
<dbReference type="GeneID" id="373971"/>
<dbReference type="KEGG" id="gga:373971"/>
<dbReference type="CTD" id="7299"/>
<dbReference type="VEuPathDB" id="HostDB:geneid_373971"/>
<dbReference type="eggNOG" id="ENOG502QRET">
    <property type="taxonomic scope" value="Eukaryota"/>
</dbReference>
<dbReference type="HOGENOM" id="CLU_038693_1_0_1"/>
<dbReference type="InParanoid" id="P55024"/>
<dbReference type="OMA" id="PMDKMAN"/>
<dbReference type="OrthoDB" id="6132182at2759"/>
<dbReference type="PhylomeDB" id="P55024"/>
<dbReference type="TreeFam" id="TF315865"/>
<dbReference type="PRO" id="PR:P55024"/>
<dbReference type="Proteomes" id="UP000000539">
    <property type="component" value="Unassembled WGS sequence"/>
</dbReference>
<dbReference type="GO" id="GO:0042470">
    <property type="term" value="C:melanosome"/>
    <property type="evidence" value="ECO:0000250"/>
    <property type="project" value="UniProtKB"/>
</dbReference>
<dbReference type="GO" id="GO:0033162">
    <property type="term" value="C:melanosome membrane"/>
    <property type="evidence" value="ECO:0007669"/>
    <property type="project" value="UniProtKB-SubCell"/>
</dbReference>
<dbReference type="GO" id="GO:0046872">
    <property type="term" value="F:metal ion binding"/>
    <property type="evidence" value="ECO:0007669"/>
    <property type="project" value="UniProtKB-KW"/>
</dbReference>
<dbReference type="GO" id="GO:0004503">
    <property type="term" value="F:tyrosinase activity"/>
    <property type="evidence" value="ECO:0000318"/>
    <property type="project" value="GO_Central"/>
</dbReference>
<dbReference type="GO" id="GO:0042438">
    <property type="term" value="P:melanin biosynthetic process"/>
    <property type="evidence" value="ECO:0000318"/>
    <property type="project" value="GO_Central"/>
</dbReference>
<dbReference type="GO" id="GO:0043473">
    <property type="term" value="P:pigmentation"/>
    <property type="evidence" value="ECO:0000318"/>
    <property type="project" value="GO_Central"/>
</dbReference>
<dbReference type="GO" id="GO:0009637">
    <property type="term" value="P:response to blue light"/>
    <property type="evidence" value="ECO:0000250"/>
    <property type="project" value="UniProtKB"/>
</dbReference>
<dbReference type="CDD" id="cd00055">
    <property type="entry name" value="EGF_Lam"/>
    <property type="match status" value="1"/>
</dbReference>
<dbReference type="FunFam" id="1.10.1280.10:FF:000003">
    <property type="entry name" value="Tyrosinase"/>
    <property type="match status" value="1"/>
</dbReference>
<dbReference type="Gene3D" id="1.10.1280.10">
    <property type="entry name" value="Di-copper center containing domain from catechol oxidase"/>
    <property type="match status" value="1"/>
</dbReference>
<dbReference type="InterPro" id="IPR008922">
    <property type="entry name" value="Di-copper_centre_dom_sf"/>
</dbReference>
<dbReference type="InterPro" id="IPR002049">
    <property type="entry name" value="LE_dom"/>
</dbReference>
<dbReference type="InterPro" id="IPR050316">
    <property type="entry name" value="Tyrosinase/Hemocyanin"/>
</dbReference>
<dbReference type="InterPro" id="IPR002227">
    <property type="entry name" value="Tyrosinase_Cu-bd"/>
</dbReference>
<dbReference type="PANTHER" id="PTHR11474:SF124">
    <property type="entry name" value="TYROSINASE"/>
    <property type="match status" value="1"/>
</dbReference>
<dbReference type="PANTHER" id="PTHR11474">
    <property type="entry name" value="TYROSINASE FAMILY MEMBER"/>
    <property type="match status" value="1"/>
</dbReference>
<dbReference type="Pfam" id="PF00264">
    <property type="entry name" value="Tyrosinase"/>
    <property type="match status" value="1"/>
</dbReference>
<dbReference type="PRINTS" id="PR00092">
    <property type="entry name" value="TYROSINASE"/>
</dbReference>
<dbReference type="SUPFAM" id="SSF48056">
    <property type="entry name" value="Di-copper centre-containing domain"/>
    <property type="match status" value="1"/>
</dbReference>
<dbReference type="PROSITE" id="PS00497">
    <property type="entry name" value="TYROSINASE_1"/>
    <property type="match status" value="1"/>
</dbReference>
<dbReference type="PROSITE" id="PS00498">
    <property type="entry name" value="TYROSINASE_2"/>
    <property type="match status" value="1"/>
</dbReference>
<gene>
    <name type="primary">TYR</name>
</gene>
<comment type="function">
    <text evidence="1">This is a copper-containing oxidase that functions in the formation of pigments such as melanins and other polyphenolic compounds (By similarity). Catalyzes the initial and rate limiting step in the cascade of reactions leading to melanin production from tyrosine (By similarity). In addition to hydroxylating tyrosine to DOPA (3,4-dihydroxyphenylalanine), also catalyzes the oxidation of DOPA to DOPA-quinone, and possibly the oxidation of DHI (5,6-dihydroxyindole) to indole-5,6 quinone (By similarity).</text>
</comment>
<comment type="catalytic activity">
    <reaction evidence="1">
        <text>2 L-dopa + O2 = 2 L-dopaquinone + 2 H2O</text>
        <dbReference type="Rhea" id="RHEA:34287"/>
        <dbReference type="ChEBI" id="CHEBI:15377"/>
        <dbReference type="ChEBI" id="CHEBI:15379"/>
        <dbReference type="ChEBI" id="CHEBI:57504"/>
        <dbReference type="ChEBI" id="CHEBI:57924"/>
        <dbReference type="EC" id="1.14.18.1"/>
    </reaction>
</comment>
<comment type="catalytic activity">
    <reaction evidence="1">
        <text>L-tyrosine + O2 = L-dopaquinone + H2O</text>
        <dbReference type="Rhea" id="RHEA:18117"/>
        <dbReference type="ChEBI" id="CHEBI:15377"/>
        <dbReference type="ChEBI" id="CHEBI:15379"/>
        <dbReference type="ChEBI" id="CHEBI:57924"/>
        <dbReference type="ChEBI" id="CHEBI:58315"/>
        <dbReference type="EC" id="1.14.18.1"/>
    </reaction>
</comment>
<comment type="cofactor">
    <cofactor evidence="3">
        <name>Cu(2+)</name>
        <dbReference type="ChEBI" id="CHEBI:29036"/>
    </cofactor>
    <text evidence="3">Binds 2 copper ions per subunit.</text>
</comment>
<comment type="subcellular location">
    <subcellularLocation>
        <location evidence="2">Melanosome membrane</location>
        <topology evidence="2">Single-pass type I membrane protein</topology>
    </subcellularLocation>
    <subcellularLocation>
        <location evidence="1">Melanosome</location>
    </subcellularLocation>
    <text evidence="1">Proper trafficking to melanosome is regulated by SGSM2, ANKRD27,RAB9A, RAB32 and RAB38.</text>
</comment>
<comment type="similarity">
    <text evidence="6">Belongs to the tyrosinase family.</text>
</comment>
<sequence>MFLFAMGLLLVILQPSTGQFPRVCANTQSLLRKECCPPWDGDGTPCGERSNRGTCQRILLSQAPLGPQFPFSGVDDREDWPSVFYNRTCRCRGNFMGFNCGECKFGFSGQNCTERRLRTRRNIFQLTISEKDKFLAYLNLAKNIPSKDYVIATGTYAQMNNGSNPMFRNINVYDLFVWMHYYASRDTLLGGSNVWRDIDFAHEAPGFLPWHRAFLLLWEREIQKITGDENFTIPYWDWRDAEDCVICTDEYMGGQHPTNPNLLSPASFFSSWQVICTQSEEYNSQQALCNATSEGPILRNPGNNDKSRTPRLPSSSEVEFCLTLTQYESGSMDKMANYSFRNTLEGFADPHTAISNISQSGLHNALHIYMNGSMSQVQGSANDPIFILHHAFVDSIFERWLRRHRPMLEVYPAANAPIGHNRENYMVPFIPLYRNGEFFISSRELGYDYEYLQEPALGSFQDFLIPYLKQAHQIWPWLVGAAVIGGIITAVLSGLILACRKKRKGTSPEIQPLLTESEDYNNVSYQSHF</sequence>
<feature type="signal peptide" evidence="4">
    <location>
        <begin position="1"/>
        <end position="18"/>
    </location>
</feature>
<feature type="chain" id="PRO_0000035881" description="Tyrosinase">
    <location>
        <begin position="19"/>
        <end position="529"/>
    </location>
</feature>
<feature type="topological domain" description="Lumenal, melanosome" evidence="4">
    <location>
        <begin position="19"/>
        <end position="476"/>
    </location>
</feature>
<feature type="transmembrane region" description="Helical" evidence="4">
    <location>
        <begin position="477"/>
        <end position="497"/>
    </location>
</feature>
<feature type="topological domain" description="Cytoplasmic" evidence="4">
    <location>
        <begin position="498"/>
        <end position="529"/>
    </location>
</feature>
<feature type="region of interest" description="Disordered" evidence="5">
    <location>
        <begin position="293"/>
        <end position="313"/>
    </location>
</feature>
<feature type="binding site" evidence="3">
    <location>
        <position position="180"/>
    </location>
    <ligand>
        <name>Cu cation</name>
        <dbReference type="ChEBI" id="CHEBI:23378"/>
        <label>A</label>
    </ligand>
</feature>
<feature type="binding site" evidence="3">
    <location>
        <position position="202"/>
    </location>
    <ligand>
        <name>Cu cation</name>
        <dbReference type="ChEBI" id="CHEBI:23378"/>
        <label>A</label>
    </ligand>
</feature>
<feature type="binding site" evidence="3">
    <location>
        <position position="211"/>
    </location>
    <ligand>
        <name>Cu cation</name>
        <dbReference type="ChEBI" id="CHEBI:23378"/>
        <label>A</label>
    </ligand>
</feature>
<feature type="binding site" evidence="3">
    <location>
        <position position="363"/>
    </location>
    <ligand>
        <name>Cu cation</name>
        <dbReference type="ChEBI" id="CHEBI:23378"/>
        <label>B</label>
    </ligand>
</feature>
<feature type="binding site" evidence="3">
    <location>
        <position position="367"/>
    </location>
    <ligand>
        <name>Cu cation</name>
        <dbReference type="ChEBI" id="CHEBI:23378"/>
        <label>B</label>
    </ligand>
</feature>
<feature type="binding site" evidence="3">
    <location>
        <position position="390"/>
    </location>
    <ligand>
        <name>Cu cation</name>
        <dbReference type="ChEBI" id="CHEBI:23378"/>
        <label>B</label>
    </ligand>
</feature>
<feature type="glycosylation site" description="N-linked (GlcNAc...) asparagine" evidence="4">
    <location>
        <position position="86"/>
    </location>
</feature>
<feature type="glycosylation site" description="N-linked (GlcNAc...) asparagine" evidence="4">
    <location>
        <position position="111"/>
    </location>
</feature>
<feature type="glycosylation site" description="N-linked (GlcNAc...) asparagine" evidence="4">
    <location>
        <position position="161"/>
    </location>
</feature>
<feature type="glycosylation site" description="N-linked (GlcNAc...) asparagine" evidence="4">
    <location>
        <position position="230"/>
    </location>
</feature>
<feature type="glycosylation site" description="N-linked (GlcNAc...) asparagine" evidence="4">
    <location>
        <position position="290"/>
    </location>
</feature>
<feature type="glycosylation site" description="N-linked (GlcNAc...) asparagine" evidence="4">
    <location>
        <position position="337"/>
    </location>
</feature>
<feature type="glycosylation site" description="N-linked (GlcNAc...) asparagine" evidence="4">
    <location>
        <position position="356"/>
    </location>
</feature>
<feature type="glycosylation site" description="N-linked (GlcNAc...) asparagine" evidence="4">
    <location>
        <position position="371"/>
    </location>
</feature>
<organism>
    <name type="scientific">Gallus gallus</name>
    <name type="common">Chicken</name>
    <dbReference type="NCBI Taxonomy" id="9031"/>
    <lineage>
        <taxon>Eukaryota</taxon>
        <taxon>Metazoa</taxon>
        <taxon>Chordata</taxon>
        <taxon>Craniata</taxon>
        <taxon>Vertebrata</taxon>
        <taxon>Euteleostomi</taxon>
        <taxon>Archelosauria</taxon>
        <taxon>Archosauria</taxon>
        <taxon>Dinosauria</taxon>
        <taxon>Saurischia</taxon>
        <taxon>Theropoda</taxon>
        <taxon>Coelurosauria</taxon>
        <taxon>Aves</taxon>
        <taxon>Neognathae</taxon>
        <taxon>Galloanserae</taxon>
        <taxon>Galliformes</taxon>
        <taxon>Phasianidae</taxon>
        <taxon>Phasianinae</taxon>
        <taxon>Gallus</taxon>
    </lineage>
</organism>
<accession>P55024</accession>
<reference key="1">
    <citation type="journal article" date="1992" name="Pigment Cell Res.">
        <title>Isolation and characterization of a chicken tyrosinase cDNA.</title>
        <authorList>
            <person name="Mochii M."/>
            <person name="Iio A."/>
            <person name="Yamamoto H."/>
            <person name="Takeuchi T."/>
            <person name="Eguchi G."/>
        </authorList>
    </citation>
    <scope>NUCLEOTIDE SEQUENCE [MRNA]</scope>
    <source>
        <strain>White leghorn</strain>
    </source>
</reference>
<reference key="2">
    <citation type="journal article" date="1996" name="Gene">
        <title>Characteristic sequences in the promoter region of the chicken tyrosinase-encoding gene.</title>
        <authorList>
            <person name="Ferguson C.A."/>
            <person name="Kidson S.H."/>
        </authorList>
    </citation>
    <scope>NUCLEOTIDE SEQUENCE [GENOMIC DNA] OF 1-273</scope>
</reference>
<protein>
    <recommendedName>
        <fullName>Tyrosinase</fullName>
        <ecNumber>1.14.18.1</ecNumber>
    </recommendedName>
    <alternativeName>
        <fullName>Monophenol monooxygenase</fullName>
    </alternativeName>
</protein>
<keyword id="KW-0186">Copper</keyword>
<keyword id="KW-0325">Glycoprotein</keyword>
<keyword id="KW-0470">Melanin biosynthesis</keyword>
<keyword id="KW-0472">Membrane</keyword>
<keyword id="KW-0479">Metal-binding</keyword>
<keyword id="KW-0503">Monooxygenase</keyword>
<keyword id="KW-0560">Oxidoreductase</keyword>
<keyword id="KW-1185">Reference proteome</keyword>
<keyword id="KW-0732">Signal</keyword>
<keyword id="KW-0812">Transmembrane</keyword>
<keyword id="KW-1133">Transmembrane helix</keyword>